<reference key="1">
    <citation type="journal article" date="2002" name="Nature">
        <title>The genome sequence of Schizosaccharomyces pombe.</title>
        <authorList>
            <person name="Wood V."/>
            <person name="Gwilliam R."/>
            <person name="Rajandream M.A."/>
            <person name="Lyne M.H."/>
            <person name="Lyne R."/>
            <person name="Stewart A."/>
            <person name="Sgouros J.G."/>
            <person name="Peat N."/>
            <person name="Hayles J."/>
            <person name="Baker S.G."/>
            <person name="Basham D."/>
            <person name="Bowman S."/>
            <person name="Brooks K."/>
            <person name="Brown D."/>
            <person name="Brown S."/>
            <person name="Chillingworth T."/>
            <person name="Churcher C.M."/>
            <person name="Collins M."/>
            <person name="Connor R."/>
            <person name="Cronin A."/>
            <person name="Davis P."/>
            <person name="Feltwell T."/>
            <person name="Fraser A."/>
            <person name="Gentles S."/>
            <person name="Goble A."/>
            <person name="Hamlin N."/>
            <person name="Harris D.E."/>
            <person name="Hidalgo J."/>
            <person name="Hodgson G."/>
            <person name="Holroyd S."/>
            <person name="Hornsby T."/>
            <person name="Howarth S."/>
            <person name="Huckle E.J."/>
            <person name="Hunt S."/>
            <person name="Jagels K."/>
            <person name="James K.D."/>
            <person name="Jones L."/>
            <person name="Jones M."/>
            <person name="Leather S."/>
            <person name="McDonald S."/>
            <person name="McLean J."/>
            <person name="Mooney P."/>
            <person name="Moule S."/>
            <person name="Mungall K.L."/>
            <person name="Murphy L.D."/>
            <person name="Niblett D."/>
            <person name="Odell C."/>
            <person name="Oliver K."/>
            <person name="O'Neil S."/>
            <person name="Pearson D."/>
            <person name="Quail M.A."/>
            <person name="Rabbinowitsch E."/>
            <person name="Rutherford K.M."/>
            <person name="Rutter S."/>
            <person name="Saunders D."/>
            <person name="Seeger K."/>
            <person name="Sharp S."/>
            <person name="Skelton J."/>
            <person name="Simmonds M.N."/>
            <person name="Squares R."/>
            <person name="Squares S."/>
            <person name="Stevens K."/>
            <person name="Taylor K."/>
            <person name="Taylor R.G."/>
            <person name="Tivey A."/>
            <person name="Walsh S.V."/>
            <person name="Warren T."/>
            <person name="Whitehead S."/>
            <person name="Woodward J.R."/>
            <person name="Volckaert G."/>
            <person name="Aert R."/>
            <person name="Robben J."/>
            <person name="Grymonprez B."/>
            <person name="Weltjens I."/>
            <person name="Vanstreels E."/>
            <person name="Rieger M."/>
            <person name="Schaefer M."/>
            <person name="Mueller-Auer S."/>
            <person name="Gabel C."/>
            <person name="Fuchs M."/>
            <person name="Duesterhoeft A."/>
            <person name="Fritzc C."/>
            <person name="Holzer E."/>
            <person name="Moestl D."/>
            <person name="Hilbert H."/>
            <person name="Borzym K."/>
            <person name="Langer I."/>
            <person name="Beck A."/>
            <person name="Lehrach H."/>
            <person name="Reinhardt R."/>
            <person name="Pohl T.M."/>
            <person name="Eger P."/>
            <person name="Zimmermann W."/>
            <person name="Wedler H."/>
            <person name="Wambutt R."/>
            <person name="Purnelle B."/>
            <person name="Goffeau A."/>
            <person name="Cadieu E."/>
            <person name="Dreano S."/>
            <person name="Gloux S."/>
            <person name="Lelaure V."/>
            <person name="Mottier S."/>
            <person name="Galibert F."/>
            <person name="Aves S.J."/>
            <person name="Xiang Z."/>
            <person name="Hunt C."/>
            <person name="Moore K."/>
            <person name="Hurst S.M."/>
            <person name="Lucas M."/>
            <person name="Rochet M."/>
            <person name="Gaillardin C."/>
            <person name="Tallada V.A."/>
            <person name="Garzon A."/>
            <person name="Thode G."/>
            <person name="Daga R.R."/>
            <person name="Cruzado L."/>
            <person name="Jimenez J."/>
            <person name="Sanchez M."/>
            <person name="del Rey F."/>
            <person name="Benito J."/>
            <person name="Dominguez A."/>
            <person name="Revuelta J.L."/>
            <person name="Moreno S."/>
            <person name="Armstrong J."/>
            <person name="Forsburg S.L."/>
            <person name="Cerutti L."/>
            <person name="Lowe T."/>
            <person name="McCombie W.R."/>
            <person name="Paulsen I."/>
            <person name="Potashkin J."/>
            <person name="Shpakovski G.V."/>
            <person name="Ussery D."/>
            <person name="Barrell B.G."/>
            <person name="Nurse P."/>
        </authorList>
    </citation>
    <scope>NUCLEOTIDE SEQUENCE [LARGE SCALE GENOMIC DNA]</scope>
    <source>
        <strain>972 / ATCC 24843</strain>
    </source>
</reference>
<reference key="2">
    <citation type="journal article" date="2008" name="J. Proteome Res.">
        <title>Phosphoproteome analysis of fission yeast.</title>
        <authorList>
            <person name="Wilson-Grady J.T."/>
            <person name="Villen J."/>
            <person name="Gygi S.P."/>
        </authorList>
    </citation>
    <scope>PHOSPHORYLATION [LARGE SCALE ANALYSIS] AT THR-88; SER-108 AND SER-109</scope>
    <scope>IDENTIFICATION BY MASS SPECTROMETRY</scope>
</reference>
<gene>
    <name type="ORF">SPAC22F8.05</name>
</gene>
<dbReference type="EC" id="2.4.1.15"/>
<dbReference type="EMBL" id="CU329670">
    <property type="protein sequence ID" value="CAB52715.1"/>
    <property type="molecule type" value="Genomic_DNA"/>
</dbReference>
<dbReference type="PIR" id="T38195">
    <property type="entry name" value="T38195"/>
</dbReference>
<dbReference type="RefSeq" id="NP_594728.1">
    <property type="nucleotide sequence ID" value="NM_001020156.2"/>
</dbReference>
<dbReference type="SMR" id="Q9UUI7"/>
<dbReference type="BioGRID" id="278393">
    <property type="interactions" value="29"/>
</dbReference>
<dbReference type="FunCoup" id="Q9UUI7">
    <property type="interactions" value="43"/>
</dbReference>
<dbReference type="STRING" id="284812.Q9UUI7"/>
<dbReference type="CAZy" id="GT20">
    <property type="family name" value="Glycosyltransferase Family 20"/>
</dbReference>
<dbReference type="iPTMnet" id="Q9UUI7"/>
<dbReference type="PaxDb" id="4896-SPAC22F8.05.1"/>
<dbReference type="EnsemblFungi" id="SPAC22F8.05.1">
    <property type="protein sequence ID" value="SPAC22F8.05.1:pep"/>
    <property type="gene ID" value="SPAC22F8.05"/>
</dbReference>
<dbReference type="KEGG" id="spo:2541903"/>
<dbReference type="PomBase" id="SPAC22F8.05"/>
<dbReference type="VEuPathDB" id="FungiDB:SPAC22F8.05"/>
<dbReference type="eggNOG" id="KOG1050">
    <property type="taxonomic scope" value="Eukaryota"/>
</dbReference>
<dbReference type="HOGENOM" id="CLU_002351_2_1_1"/>
<dbReference type="InParanoid" id="Q9UUI7"/>
<dbReference type="OMA" id="SHDFIHC"/>
<dbReference type="PhylomeDB" id="Q9UUI7"/>
<dbReference type="PRO" id="PR:Q9UUI7"/>
<dbReference type="Proteomes" id="UP000002485">
    <property type="component" value="Chromosome I"/>
</dbReference>
<dbReference type="GO" id="GO:0005946">
    <property type="term" value="C:alpha,alpha-trehalose-phosphate synthase complex (UDP-forming)"/>
    <property type="evidence" value="ECO:0000318"/>
    <property type="project" value="GO_Central"/>
</dbReference>
<dbReference type="GO" id="GO:0005829">
    <property type="term" value="C:cytosol"/>
    <property type="evidence" value="ECO:0007005"/>
    <property type="project" value="PomBase"/>
</dbReference>
<dbReference type="GO" id="GO:0003825">
    <property type="term" value="F:alpha,alpha-trehalose-phosphate synthase (UDP-forming) activity"/>
    <property type="evidence" value="ECO:0000266"/>
    <property type="project" value="PomBase"/>
</dbReference>
<dbReference type="GO" id="GO:0005992">
    <property type="term" value="P:trehalose biosynthetic process"/>
    <property type="evidence" value="ECO:0000266"/>
    <property type="project" value="PomBase"/>
</dbReference>
<dbReference type="CDD" id="cd03788">
    <property type="entry name" value="GT20_TPS"/>
    <property type="match status" value="1"/>
</dbReference>
<dbReference type="CDD" id="cd01627">
    <property type="entry name" value="HAD_TPP"/>
    <property type="match status" value="1"/>
</dbReference>
<dbReference type="Gene3D" id="3.40.50.2000">
    <property type="entry name" value="Glycogen Phosphorylase B"/>
    <property type="match status" value="2"/>
</dbReference>
<dbReference type="Gene3D" id="3.40.50.1000">
    <property type="entry name" value="HAD superfamily/HAD-like"/>
    <property type="match status" value="1"/>
</dbReference>
<dbReference type="Gene3D" id="3.30.70.1020">
    <property type="entry name" value="Trehalose-6-phosphate phosphatase related protein, domain 2"/>
    <property type="match status" value="1"/>
</dbReference>
<dbReference type="InterPro" id="IPR001830">
    <property type="entry name" value="Glyco_trans_20"/>
</dbReference>
<dbReference type="InterPro" id="IPR036412">
    <property type="entry name" value="HAD-like_sf"/>
</dbReference>
<dbReference type="InterPro" id="IPR023214">
    <property type="entry name" value="HAD_sf"/>
</dbReference>
<dbReference type="InterPro" id="IPR003337">
    <property type="entry name" value="Trehalose_PPase"/>
</dbReference>
<dbReference type="PANTHER" id="PTHR10788:SF119">
    <property type="entry name" value="ALPHA,ALPHA-TREHALOSE-PHOSPHATE SYNTHASE [UDP-FORMING] 100 KDA SUBUNIT-RELATED"/>
    <property type="match status" value="1"/>
</dbReference>
<dbReference type="PANTHER" id="PTHR10788">
    <property type="entry name" value="TREHALOSE-6-PHOSPHATE SYNTHASE"/>
    <property type="match status" value="1"/>
</dbReference>
<dbReference type="Pfam" id="PF00982">
    <property type="entry name" value="Glyco_transf_20"/>
    <property type="match status" value="1"/>
</dbReference>
<dbReference type="Pfam" id="PF02358">
    <property type="entry name" value="Trehalose_PPase"/>
    <property type="match status" value="1"/>
</dbReference>
<dbReference type="SUPFAM" id="SSF56784">
    <property type="entry name" value="HAD-like"/>
    <property type="match status" value="1"/>
</dbReference>
<dbReference type="SUPFAM" id="SSF53756">
    <property type="entry name" value="UDP-Glycosyltransferase/glycogen phosphorylase"/>
    <property type="match status" value="1"/>
</dbReference>
<proteinExistence type="evidence at protein level"/>
<protein>
    <recommendedName>
        <fullName>Putative alpha,alpha-trehalose-phosphate synthase [UDP-forming] 100 kDa subunit</fullName>
        <ecNumber>2.4.1.15</ecNumber>
    </recommendedName>
    <alternativeName>
        <fullName>Trehalose-6-phosphate synthase</fullName>
    </alternativeName>
    <alternativeName>
        <fullName>UDP-glucose-glucosephosphate glucosyltransferase</fullName>
    </alternativeName>
</protein>
<comment type="catalytic activity">
    <reaction>
        <text>D-glucose 6-phosphate + UDP-alpha-D-glucose = alpha,alpha-trehalose 6-phosphate + UDP + H(+)</text>
        <dbReference type="Rhea" id="RHEA:18889"/>
        <dbReference type="ChEBI" id="CHEBI:15378"/>
        <dbReference type="ChEBI" id="CHEBI:58223"/>
        <dbReference type="ChEBI" id="CHEBI:58429"/>
        <dbReference type="ChEBI" id="CHEBI:58885"/>
        <dbReference type="ChEBI" id="CHEBI:61548"/>
        <dbReference type="EC" id="2.4.1.15"/>
    </reaction>
</comment>
<comment type="similarity">
    <text evidence="3">In the N-terminal section; belongs to the glycosyltransferase 20 family.</text>
</comment>
<feature type="chain" id="PRO_0000122513" description="Putative alpha,alpha-trehalose-phosphate synthase [UDP-forming] 100 kDa subunit">
    <location>
        <begin position="1"/>
        <end position="891"/>
    </location>
</feature>
<feature type="region of interest" description="Disordered" evidence="1">
    <location>
        <begin position="88"/>
        <end position="126"/>
    </location>
</feature>
<feature type="region of interest" description="Glycosyltransferase">
    <location>
        <begin position="132"/>
        <end position="613"/>
    </location>
</feature>
<feature type="compositionally biased region" description="Polar residues" evidence="1">
    <location>
        <begin position="106"/>
        <end position="124"/>
    </location>
</feature>
<feature type="modified residue" description="Phosphothreonine" evidence="2">
    <location>
        <position position="88"/>
    </location>
</feature>
<feature type="modified residue" description="Phosphoserine" evidence="2">
    <location>
        <position position="108"/>
    </location>
</feature>
<feature type="modified residue" description="Phosphoserine" evidence="2">
    <location>
        <position position="109"/>
    </location>
</feature>
<sequence length="891" mass="100661">MGRQFICSIYLPYTINFHLDELEGNHESHPAITHQEKVTQTHRDSVKIDDILTRLSISKSESGQATPVLTPQLEGMNDYFSLGPSKRTGGSMTPGLGAMSPIPGSGRSSPLYTQPRSRATSPSRVRQADRFAAPGIGAGALPIRRKRRDSLAKSVALFESARWSVERGVVGNSGLFHAVDAAVRDHGLQNPLWVGLLGMPTESLSEKTKNAISGALLVKHQSLVVYTSDSNFEGHYNHYCRKILWPSLHYQHNEIFSFFHEESNWDDYVAVNRAFADALIKNYKTGDTIWVNDYHLLLVPNMVRERIPSAIIGLFIHVSFPSSEVFRCFARRKELLQGMLGSNLIGFQTEEYKRHFLQSCSRVLYAESTFDRILLDDRYIDVYAHPIGADPVLVDKWLENPETLEVKEVLEKRYANLNIFVGCDKMDPIRGIREKLLAFEQFLYDNPEYQKNTILIQTSTFTEEQKEYGVAISDIVTRINSAFGDFSLDHLPVTILSSDLSYPQYLALLSVADAFIVTSLREGMSLTCHEFILTQRQKKSPLIVSEFIGCASMFSNGAFIVNPWSTLELSLSMKKALTLSTNERNQRYSNCLDVVLTHSASNWVTGFETKLKKSWTSQQKRDFSRLPRFTLNFIGNRYDHAKKRLLILNFDGNAVTWEGRHEFVDFHYGYMVSILSKLIADDRNIVYIASCLEEDELESLFMHVPGVGLIAENGCYVLPHYAENVHQSWIRLYKKQQMDWREPLHDIIQYYSERTPGSSLIDHGFAMEFNYVKAENRENGLRSAGELASSINETQHGCRAVPLDGRVLCEPTTISKATAANYIMTHLIKNPEELDLILVAGNNRTDESVFAWANKSKVSSFTVSMGVGNTEAKAYTDGIPSFFNVLNSLCA</sequence>
<organism>
    <name type="scientific">Schizosaccharomyces pombe (strain 972 / ATCC 24843)</name>
    <name type="common">Fission yeast</name>
    <dbReference type="NCBI Taxonomy" id="284812"/>
    <lineage>
        <taxon>Eukaryota</taxon>
        <taxon>Fungi</taxon>
        <taxon>Dikarya</taxon>
        <taxon>Ascomycota</taxon>
        <taxon>Taphrinomycotina</taxon>
        <taxon>Schizosaccharomycetes</taxon>
        <taxon>Schizosaccharomycetales</taxon>
        <taxon>Schizosaccharomycetaceae</taxon>
        <taxon>Schizosaccharomyces</taxon>
    </lineage>
</organism>
<accession>Q9UUI7</accession>
<keyword id="KW-0328">Glycosyltransferase</keyword>
<keyword id="KW-0597">Phosphoprotein</keyword>
<keyword id="KW-1185">Reference proteome</keyword>
<keyword id="KW-0808">Transferase</keyword>
<evidence type="ECO:0000256" key="1">
    <source>
        <dbReference type="SAM" id="MobiDB-lite"/>
    </source>
</evidence>
<evidence type="ECO:0000269" key="2">
    <source>
    </source>
</evidence>
<evidence type="ECO:0000305" key="3"/>
<name>TPSY_SCHPO</name>